<reference key="1">
    <citation type="journal article" date="1997" name="Genome Res.">
        <title>Identification of a conserved family of Meis1-related homeobox genes.</title>
        <authorList>
            <person name="Steelman S."/>
            <person name="Moskow J.J."/>
            <person name="Muzynski K."/>
            <person name="North C."/>
            <person name="Druck T."/>
            <person name="Montgomery J.C."/>
            <person name="Huebner K."/>
            <person name="Daar I.O."/>
            <person name="Buchberg A.M."/>
        </authorList>
    </citation>
    <scope>NUCLEOTIDE SEQUENCE [MRNA] (ISOFORMS 1 AND 2)</scope>
    <source>
        <tissue>Oocyte</tissue>
    </source>
</reference>
<reference key="2">
    <citation type="journal article" date="2001" name="Oncogene">
        <title>Xmeis1, a protooncogene involved in specifying neural crest cell fate in Xenopus embryos.</title>
        <authorList>
            <person name="Maeda R."/>
            <person name="Mood K."/>
            <person name="Jones T.L."/>
            <person name="Aruga J."/>
            <person name="Buchberg A.M."/>
            <person name="Daar I.O."/>
        </authorList>
    </citation>
    <scope>FUNCTION</scope>
    <scope>TISSUE SPECIFICITY</scope>
    <scope>DEVELOPMENTAL STAGE</scope>
</reference>
<reference key="3">
    <citation type="journal article" date="2002" name="Proc. Natl. Acad. Sci. U.S.A.">
        <title>Xpbx1b and Xmeis1b play a collaborative role in hindbrain and neural crest gene expression in Xenopus embryos.</title>
        <authorList>
            <person name="Maeda R."/>
            <person name="Ishimura A."/>
            <person name="Mood K."/>
            <person name="Park E.K."/>
            <person name="Buchberg A.M."/>
            <person name="Daar I.O."/>
        </authorList>
    </citation>
    <scope>FUNCTION</scope>
    <scope>SUBCELLULAR LOCATION</scope>
    <scope>INTERACTION WITH PBX1 ISOFORM B</scope>
</reference>
<reference key="4">
    <citation type="journal article" date="2006" name="Biochem. Biophys. Res. Commun.">
        <title>Pbx1 and Meis1 regulate activity of the Xenopus laevis Zic3 promoter through a highly conserved region.</title>
        <authorList>
            <person name="Kelly L.E."/>
            <person name="Carrel T.L."/>
            <person name="Herman G.E."/>
            <person name="El-Hodiri H.M."/>
        </authorList>
    </citation>
    <scope>FUNCTION</scope>
</reference>
<name>MEIS1_XENLA</name>
<protein>
    <recommendedName>
        <fullName>Homeobox protein Meis1</fullName>
        <shortName>XMeis1</shortName>
    </recommendedName>
</protein>
<organism>
    <name type="scientific">Xenopus laevis</name>
    <name type="common">African clawed frog</name>
    <dbReference type="NCBI Taxonomy" id="8355"/>
    <lineage>
        <taxon>Eukaryota</taxon>
        <taxon>Metazoa</taxon>
        <taxon>Chordata</taxon>
        <taxon>Craniata</taxon>
        <taxon>Vertebrata</taxon>
        <taxon>Euteleostomi</taxon>
        <taxon>Amphibia</taxon>
        <taxon>Batrachia</taxon>
        <taxon>Anura</taxon>
        <taxon>Pipoidea</taxon>
        <taxon>Pipidae</taxon>
        <taxon>Xenopodinae</taxon>
        <taxon>Xenopus</taxon>
        <taxon>Xenopus</taxon>
    </lineage>
</organism>
<sequence>MAQRYDDLPHYGGMDGVGLPSSMYGDPHAARSMKSVHHLNHGPPLHPHQYPHSAHTNAMPPSMGSSVNDALKRDKDSIYGHPLFPLLALIFEKCELATCTPREPGVAGGDVCSSESFNEDIAVFSKQIRAEKPLFSSNPELDNLMIQAIQVLRFHLLELEKVHELCDNFCHRYISCLEGKMPIDLVIDDRDGGSKSDSEDLTRSAPLTDQPSWSRDHDDAASIRSGGTPGPSSGGHTSHSGDNSSEQGDGLDNSIASPSTGDDDDPDKEKKRNKGRGIFPKVATNIMRAWLFQHLTHPYPSEEQKKQLAQDTGLTILQVNNWFINARRRIVQPMIDQSNRAVSQGTPYNPDGQPIGGFVMDGQQHMGIRAPGPMSGMGMNMGMEGQWHYM</sequence>
<proteinExistence type="evidence at protein level"/>
<evidence type="ECO:0000250" key="1">
    <source>
        <dbReference type="UniProtKB" id="O00470"/>
    </source>
</evidence>
<evidence type="ECO:0000255" key="2"/>
<evidence type="ECO:0000255" key="3">
    <source>
        <dbReference type="PROSITE-ProRule" id="PRU00108"/>
    </source>
</evidence>
<evidence type="ECO:0000256" key="4">
    <source>
        <dbReference type="SAM" id="MobiDB-lite"/>
    </source>
</evidence>
<evidence type="ECO:0000269" key="5">
    <source>
    </source>
</evidence>
<evidence type="ECO:0000269" key="6">
    <source>
    </source>
</evidence>
<evidence type="ECO:0000269" key="7">
    <source>
    </source>
</evidence>
<evidence type="ECO:0000303" key="8">
    <source>
    </source>
</evidence>
<evidence type="ECO:0000305" key="9"/>
<comment type="function">
    <text evidence="5 6 7">Induces expression of a number of neural crest marker genes as part of a heterodimer with isoform b of pbx1, to specify neural crest cell fate. Binds to a highly conserved region in the promoter of the neural crest marker gene zic3.</text>
</comment>
<comment type="subunit">
    <text evidence="6">Interacts with pbx1 isoform b.</text>
</comment>
<comment type="subcellular location">
    <subcellularLocation>
        <location evidence="6">Cytoplasm</location>
    </subcellularLocation>
    <subcellularLocation>
        <location evidence="3 6">Nucleus</location>
    </subcellularLocation>
    <text>Relocation from the cytoplasm to the nucleus is dependent on interaction with pbx1 isoform b.</text>
</comment>
<comment type="alternative products">
    <event type="alternative splicing"/>
    <isoform>
        <id>P79937-1</id>
        <name>1</name>
        <name>XMeis1-1</name>
        <name>a</name>
        <sequence type="displayed"/>
    </isoform>
    <isoform>
        <id>P79937-2</id>
        <name>2</name>
        <name>XMeis1-2</name>
        <name>b</name>
        <sequence type="described" ref="VSP_002241"/>
    </isoform>
    <text>Additional isoforms seem to exist.</text>
</comment>
<comment type="tissue specificity">
    <text evidence="5">In the embryo, displays a broad expression pattern with high levels observed in tissues of neural cell fate such as midbrain, hindbrain, dorsal portion of the neural tube, and neural crest-derived branchial arches. Widely expressed in the adult with highest levels in brain and spleen.</text>
</comment>
<comment type="developmental stage">
    <text evidence="5">Levels of isoform 1 decrease slightly during gastrulation but show a marked increase during neurulation and throughout embryogenesis. Expression of isoform 2 is low during early embryogenesis but increases after tailbud stages.</text>
</comment>
<comment type="similarity">
    <text evidence="9">Belongs to the TALE/MEIS homeobox family.</text>
</comment>
<dbReference type="EMBL" id="U68386">
    <property type="protein sequence ID" value="AAB19196.1"/>
    <property type="molecule type" value="mRNA"/>
</dbReference>
<dbReference type="EMBL" id="U68387">
    <property type="protein sequence ID" value="AAB19197.1"/>
    <property type="molecule type" value="mRNA"/>
</dbReference>
<dbReference type="RefSeq" id="NP_001084104.1">
    <property type="nucleotide sequence ID" value="NM_001090635.1"/>
</dbReference>
<dbReference type="SMR" id="P79937"/>
<dbReference type="GeneID" id="399305"/>
<dbReference type="KEGG" id="xla:399305"/>
<dbReference type="AGR" id="Xenbase:XB-GENE-479443"/>
<dbReference type="CTD" id="399305"/>
<dbReference type="Xenbase" id="XB-GENE-479443">
    <property type="gene designation" value="meis1.S"/>
</dbReference>
<dbReference type="OrthoDB" id="10056939at2759"/>
<dbReference type="Proteomes" id="UP000186698">
    <property type="component" value="Chromosome 5S"/>
</dbReference>
<dbReference type="Bgee" id="399305">
    <property type="expression patterns" value="Expressed in pancreas and 19 other cell types or tissues"/>
</dbReference>
<dbReference type="GO" id="GO:0005737">
    <property type="term" value="C:cytoplasm"/>
    <property type="evidence" value="ECO:0000314"/>
    <property type="project" value="UniProtKB"/>
</dbReference>
<dbReference type="GO" id="GO:0005634">
    <property type="term" value="C:nucleus"/>
    <property type="evidence" value="ECO:0000314"/>
    <property type="project" value="UniProtKB"/>
</dbReference>
<dbReference type="GO" id="GO:0005667">
    <property type="term" value="C:transcription regulator complex"/>
    <property type="evidence" value="ECO:0000316"/>
    <property type="project" value="UniProtKB"/>
</dbReference>
<dbReference type="GO" id="GO:0001228">
    <property type="term" value="F:DNA-binding transcription activator activity, RNA polymerase II-specific"/>
    <property type="evidence" value="ECO:0000318"/>
    <property type="project" value="GO_Central"/>
</dbReference>
<dbReference type="GO" id="GO:0043565">
    <property type="term" value="F:sequence-specific DNA binding"/>
    <property type="evidence" value="ECO:0000314"/>
    <property type="project" value="UniProtKB"/>
</dbReference>
<dbReference type="GO" id="GO:0001525">
    <property type="term" value="P:angiogenesis"/>
    <property type="evidence" value="ECO:0000318"/>
    <property type="project" value="GO_Central"/>
</dbReference>
<dbReference type="GO" id="GO:0009887">
    <property type="term" value="P:animal organ morphogenesis"/>
    <property type="evidence" value="ECO:0000318"/>
    <property type="project" value="GO_Central"/>
</dbReference>
<dbReference type="GO" id="GO:0007420">
    <property type="term" value="P:brain development"/>
    <property type="evidence" value="ECO:0000318"/>
    <property type="project" value="GO_Central"/>
</dbReference>
<dbReference type="GO" id="GO:0009880">
    <property type="term" value="P:embryonic pattern specification"/>
    <property type="evidence" value="ECO:0000318"/>
    <property type="project" value="GO_Central"/>
</dbReference>
<dbReference type="GO" id="GO:0001654">
    <property type="term" value="P:eye development"/>
    <property type="evidence" value="ECO:0000318"/>
    <property type="project" value="GO_Central"/>
</dbReference>
<dbReference type="GO" id="GO:0030097">
    <property type="term" value="P:hemopoiesis"/>
    <property type="evidence" value="ECO:0000318"/>
    <property type="project" value="GO_Central"/>
</dbReference>
<dbReference type="GO" id="GO:0014036">
    <property type="term" value="P:neural crest cell fate specification"/>
    <property type="evidence" value="ECO:0000316"/>
    <property type="project" value="UniProtKB"/>
</dbReference>
<dbReference type="GO" id="GO:0008284">
    <property type="term" value="P:positive regulation of cell population proliferation"/>
    <property type="evidence" value="ECO:0000318"/>
    <property type="project" value="GO_Central"/>
</dbReference>
<dbReference type="GO" id="GO:0045893">
    <property type="term" value="P:positive regulation of DNA-templated transcription"/>
    <property type="evidence" value="ECO:0000314"/>
    <property type="project" value="UniProtKB"/>
</dbReference>
<dbReference type="GO" id="GO:0045944">
    <property type="term" value="P:positive regulation of transcription by RNA polymerase II"/>
    <property type="evidence" value="ECO:0000314"/>
    <property type="project" value="UniProtKB"/>
</dbReference>
<dbReference type="CDD" id="cd00086">
    <property type="entry name" value="homeodomain"/>
    <property type="match status" value="1"/>
</dbReference>
<dbReference type="FunFam" id="1.10.10.60:FF:000004">
    <property type="entry name" value="Meis2 homeobox isoform 2c"/>
    <property type="match status" value="1"/>
</dbReference>
<dbReference type="Gene3D" id="1.10.10.60">
    <property type="entry name" value="Homeodomain-like"/>
    <property type="match status" value="1"/>
</dbReference>
<dbReference type="InterPro" id="IPR001356">
    <property type="entry name" value="HD"/>
</dbReference>
<dbReference type="InterPro" id="IPR009057">
    <property type="entry name" value="Homeodomain-like_sf"/>
</dbReference>
<dbReference type="InterPro" id="IPR008422">
    <property type="entry name" value="KN_HD"/>
</dbReference>
<dbReference type="InterPro" id="IPR032453">
    <property type="entry name" value="PKNOX/Meis_N"/>
</dbReference>
<dbReference type="InterPro" id="IPR050224">
    <property type="entry name" value="TALE_homeobox"/>
</dbReference>
<dbReference type="PANTHER" id="PTHR11850">
    <property type="entry name" value="HOMEOBOX PROTEIN TRANSCRIPTION FACTORS"/>
    <property type="match status" value="1"/>
</dbReference>
<dbReference type="Pfam" id="PF05920">
    <property type="entry name" value="Homeobox_KN"/>
    <property type="match status" value="1"/>
</dbReference>
<dbReference type="Pfam" id="PF16493">
    <property type="entry name" value="Meis_PKNOX_N"/>
    <property type="match status" value="1"/>
</dbReference>
<dbReference type="SMART" id="SM00389">
    <property type="entry name" value="HOX"/>
    <property type="match status" value="1"/>
</dbReference>
<dbReference type="SUPFAM" id="SSF46689">
    <property type="entry name" value="Homeodomain-like"/>
    <property type="match status" value="1"/>
</dbReference>
<dbReference type="PROSITE" id="PS50071">
    <property type="entry name" value="HOMEOBOX_2"/>
    <property type="match status" value="1"/>
</dbReference>
<accession>P79937</accession>
<accession>P79938</accession>
<keyword id="KW-0010">Activator</keyword>
<keyword id="KW-0025">Alternative splicing</keyword>
<keyword id="KW-0963">Cytoplasm</keyword>
<keyword id="KW-0217">Developmental protein</keyword>
<keyword id="KW-0238">DNA-binding</keyword>
<keyword id="KW-0371">Homeobox</keyword>
<keyword id="KW-0539">Nucleus</keyword>
<keyword id="KW-1185">Reference proteome</keyword>
<keyword id="KW-0804">Transcription</keyword>
<feature type="chain" id="PRO_0000049107" description="Homeobox protein Meis1">
    <location>
        <begin position="1"/>
        <end position="390"/>
    </location>
</feature>
<feature type="domain" description="MEIS N-terminal" evidence="2">
    <location>
        <begin position="108"/>
        <end position="191"/>
    </location>
</feature>
<feature type="DNA-binding region" description="Homeobox; TALE-type" evidence="3">
    <location>
        <begin position="272"/>
        <end position="334"/>
    </location>
</feature>
<feature type="region of interest" description="Disordered" evidence="4">
    <location>
        <begin position="188"/>
        <end position="279"/>
    </location>
</feature>
<feature type="region of interest" description="Interaction with DNA" evidence="1">
    <location>
        <begin position="299"/>
        <end position="329"/>
    </location>
</feature>
<feature type="compositionally biased region" description="Basic and acidic residues" evidence="4">
    <location>
        <begin position="188"/>
        <end position="202"/>
    </location>
</feature>
<feature type="splice variant" id="VSP_002241" description="In isoform 2." evidence="8">
    <original>PMSGMGMNMGMEGQWHYM</original>
    <variation>LQGMPGSYISPSGPMGMSMAQPSYTTSQMPLHHAQLRHGTSVHTYIPGHHHHPAMMMHGGPPQPGMPISASSPSVLNTGDPSMSGHVMNIHAQ</variation>
    <location>
        <begin position="373"/>
        <end position="390"/>
    </location>
</feature>
<feature type="sequence variant">
    <original>K</original>
    <variation>Q</variation>
    <location>
        <position position="34"/>
    </location>
</feature>
<feature type="sequence variant">
    <original>F</original>
    <variation>L</variation>
    <location>
        <position position="91"/>
    </location>
</feature>
<feature type="sequence variant">
    <original>E</original>
    <variation>K</variation>
    <location>
        <position position="178"/>
    </location>
</feature>
<feature type="sequence variant">
    <original>N</original>
    <variation>H</variation>
    <location>
        <position position="273"/>
    </location>
</feature>
<feature type="sequence variant">
    <original>G</original>
    <variation>K</variation>
    <location>
        <position position="275"/>
    </location>
</feature>
<feature type="sequence variant">
    <location>
        <position position="315"/>
    </location>
</feature>
<gene>
    <name type="primary">meis1</name>
</gene>